<sequence length="88" mass="10236">MIKVPAYMYVLECSDGTLYTGYTTDVKRRLNTHNTGKGAKYTRARLPVKLLYSEAFNSKQEAMRAEALFKQKTRQAKLTYIKQHKNEQ</sequence>
<gene>
    <name type="ordered locus">SAG0778</name>
</gene>
<feature type="chain" id="PRO_0000161391" description="UPF0213 protein SAG0778">
    <location>
        <begin position="1"/>
        <end position="88"/>
    </location>
</feature>
<feature type="domain" description="GIY-YIG" evidence="1">
    <location>
        <begin position="4"/>
        <end position="80"/>
    </location>
</feature>
<evidence type="ECO:0000255" key="1">
    <source>
        <dbReference type="PROSITE-ProRule" id="PRU00977"/>
    </source>
</evidence>
<evidence type="ECO:0000305" key="2"/>
<accession>Q8E0F5</accession>
<protein>
    <recommendedName>
        <fullName>UPF0213 protein SAG0778</fullName>
    </recommendedName>
</protein>
<organism>
    <name type="scientific">Streptococcus agalactiae serotype V (strain ATCC BAA-611 / 2603 V/R)</name>
    <dbReference type="NCBI Taxonomy" id="208435"/>
    <lineage>
        <taxon>Bacteria</taxon>
        <taxon>Bacillati</taxon>
        <taxon>Bacillota</taxon>
        <taxon>Bacilli</taxon>
        <taxon>Lactobacillales</taxon>
        <taxon>Streptococcaceae</taxon>
        <taxon>Streptococcus</taxon>
    </lineage>
</organism>
<name>Y778_STRA5</name>
<keyword id="KW-1185">Reference proteome</keyword>
<proteinExistence type="inferred from homology"/>
<dbReference type="EMBL" id="AE009948">
    <property type="protein sequence ID" value="AAM99665.1"/>
    <property type="molecule type" value="Genomic_DNA"/>
</dbReference>
<dbReference type="RefSeq" id="NP_687793.1">
    <property type="nucleotide sequence ID" value="NC_004116.1"/>
</dbReference>
<dbReference type="RefSeq" id="WP_000598736.1">
    <property type="nucleotide sequence ID" value="NC_004116.1"/>
</dbReference>
<dbReference type="SMR" id="Q8E0F5"/>
<dbReference type="STRING" id="208435.SAG0778"/>
<dbReference type="KEGG" id="sag:SAG0778"/>
<dbReference type="PATRIC" id="fig|208435.3.peg.785"/>
<dbReference type="HOGENOM" id="CLU_135650_0_3_9"/>
<dbReference type="OrthoDB" id="9807770at2"/>
<dbReference type="Proteomes" id="UP000000821">
    <property type="component" value="Chromosome"/>
</dbReference>
<dbReference type="CDD" id="cd10456">
    <property type="entry name" value="GIY-YIG_UPF0213"/>
    <property type="match status" value="1"/>
</dbReference>
<dbReference type="Gene3D" id="3.40.1440.10">
    <property type="entry name" value="GIY-YIG endonuclease"/>
    <property type="match status" value="1"/>
</dbReference>
<dbReference type="InterPro" id="IPR000305">
    <property type="entry name" value="GIY-YIG_endonuc"/>
</dbReference>
<dbReference type="InterPro" id="IPR035901">
    <property type="entry name" value="GIY-YIG_endonuc_sf"/>
</dbReference>
<dbReference type="InterPro" id="IPR050190">
    <property type="entry name" value="UPF0213_domain"/>
</dbReference>
<dbReference type="PANTHER" id="PTHR34477">
    <property type="entry name" value="UPF0213 PROTEIN YHBQ"/>
    <property type="match status" value="1"/>
</dbReference>
<dbReference type="PANTHER" id="PTHR34477:SF1">
    <property type="entry name" value="UPF0213 PROTEIN YHBQ"/>
    <property type="match status" value="1"/>
</dbReference>
<dbReference type="Pfam" id="PF01541">
    <property type="entry name" value="GIY-YIG"/>
    <property type="match status" value="1"/>
</dbReference>
<dbReference type="SUPFAM" id="SSF82771">
    <property type="entry name" value="GIY-YIG endonuclease"/>
    <property type="match status" value="1"/>
</dbReference>
<dbReference type="PROSITE" id="PS50164">
    <property type="entry name" value="GIY_YIG"/>
    <property type="match status" value="1"/>
</dbReference>
<reference key="1">
    <citation type="journal article" date="2002" name="Proc. Natl. Acad. Sci. U.S.A.">
        <title>Complete genome sequence and comparative genomic analysis of an emerging human pathogen, serotype V Streptococcus agalactiae.</title>
        <authorList>
            <person name="Tettelin H."/>
            <person name="Masignani V."/>
            <person name="Cieslewicz M.J."/>
            <person name="Eisen J.A."/>
            <person name="Peterson S.N."/>
            <person name="Wessels M.R."/>
            <person name="Paulsen I.T."/>
            <person name="Nelson K.E."/>
            <person name="Margarit I."/>
            <person name="Read T.D."/>
            <person name="Madoff L.C."/>
            <person name="Wolf A.M."/>
            <person name="Beanan M.J."/>
            <person name="Brinkac L.M."/>
            <person name="Daugherty S.C."/>
            <person name="DeBoy R.T."/>
            <person name="Durkin A.S."/>
            <person name="Kolonay J.F."/>
            <person name="Madupu R."/>
            <person name="Lewis M.R."/>
            <person name="Radune D."/>
            <person name="Fedorova N.B."/>
            <person name="Scanlan D."/>
            <person name="Khouri H.M."/>
            <person name="Mulligan S."/>
            <person name="Carty H.A."/>
            <person name="Cline R.T."/>
            <person name="Van Aken S.E."/>
            <person name="Gill J."/>
            <person name="Scarselli M."/>
            <person name="Mora M."/>
            <person name="Iacobini E.T."/>
            <person name="Brettoni C."/>
            <person name="Galli G."/>
            <person name="Mariani M."/>
            <person name="Vegni F."/>
            <person name="Maione D."/>
            <person name="Rinaudo D."/>
            <person name="Rappuoli R."/>
            <person name="Telford J.L."/>
            <person name="Kasper D.L."/>
            <person name="Grandi G."/>
            <person name="Fraser C.M."/>
        </authorList>
    </citation>
    <scope>NUCLEOTIDE SEQUENCE [LARGE SCALE GENOMIC DNA]</scope>
    <source>
        <strain>ATCC BAA-611 / 2603 V/R</strain>
    </source>
</reference>
<comment type="similarity">
    <text evidence="2">Belongs to the UPF0213 family.</text>
</comment>